<dbReference type="EMBL" id="AE014295">
    <property type="protein sequence ID" value="AAN25084.1"/>
    <property type="molecule type" value="Genomic_DNA"/>
</dbReference>
<dbReference type="RefSeq" id="NP_696448.1">
    <property type="nucleotide sequence ID" value="NC_004307.2"/>
</dbReference>
<dbReference type="RefSeq" id="WP_007053061.1">
    <property type="nucleotide sequence ID" value="NC_004307.2"/>
</dbReference>
<dbReference type="SMR" id="Q8G4U1"/>
<dbReference type="STRING" id="206672.BL1283"/>
<dbReference type="EnsemblBacteria" id="AAN25084">
    <property type="protein sequence ID" value="AAN25084"/>
    <property type="gene ID" value="BL1283"/>
</dbReference>
<dbReference type="GeneID" id="69578969"/>
<dbReference type="KEGG" id="blo:BL1283"/>
<dbReference type="PATRIC" id="fig|206672.9.peg.1570"/>
<dbReference type="HOGENOM" id="CLU_095424_4_0_11"/>
<dbReference type="OrthoDB" id="9803474at2"/>
<dbReference type="PhylomeDB" id="Q8G4U1"/>
<dbReference type="Proteomes" id="UP000000439">
    <property type="component" value="Chromosome"/>
</dbReference>
<dbReference type="GO" id="GO:0022625">
    <property type="term" value="C:cytosolic large ribosomal subunit"/>
    <property type="evidence" value="ECO:0007669"/>
    <property type="project" value="TreeGrafter"/>
</dbReference>
<dbReference type="GO" id="GO:0003735">
    <property type="term" value="F:structural constituent of ribosome"/>
    <property type="evidence" value="ECO:0007669"/>
    <property type="project" value="InterPro"/>
</dbReference>
<dbReference type="GO" id="GO:0006412">
    <property type="term" value="P:translation"/>
    <property type="evidence" value="ECO:0007669"/>
    <property type="project" value="UniProtKB-UniRule"/>
</dbReference>
<dbReference type="FunFam" id="2.40.50.100:FF:000020">
    <property type="entry name" value="50S ribosomal protein L27"/>
    <property type="match status" value="1"/>
</dbReference>
<dbReference type="Gene3D" id="2.40.50.100">
    <property type="match status" value="1"/>
</dbReference>
<dbReference type="HAMAP" id="MF_00539">
    <property type="entry name" value="Ribosomal_bL27"/>
    <property type="match status" value="1"/>
</dbReference>
<dbReference type="InterPro" id="IPR001684">
    <property type="entry name" value="Ribosomal_bL27"/>
</dbReference>
<dbReference type="InterPro" id="IPR018261">
    <property type="entry name" value="Ribosomal_bL27_CS"/>
</dbReference>
<dbReference type="NCBIfam" id="TIGR00062">
    <property type="entry name" value="L27"/>
    <property type="match status" value="1"/>
</dbReference>
<dbReference type="PANTHER" id="PTHR15893:SF0">
    <property type="entry name" value="LARGE RIBOSOMAL SUBUNIT PROTEIN BL27M"/>
    <property type="match status" value="1"/>
</dbReference>
<dbReference type="PANTHER" id="PTHR15893">
    <property type="entry name" value="RIBOSOMAL PROTEIN L27"/>
    <property type="match status" value="1"/>
</dbReference>
<dbReference type="Pfam" id="PF01016">
    <property type="entry name" value="Ribosomal_L27"/>
    <property type="match status" value="1"/>
</dbReference>
<dbReference type="PRINTS" id="PR00063">
    <property type="entry name" value="RIBOSOMALL27"/>
</dbReference>
<dbReference type="SUPFAM" id="SSF110324">
    <property type="entry name" value="Ribosomal L27 protein-like"/>
    <property type="match status" value="1"/>
</dbReference>
<dbReference type="PROSITE" id="PS00831">
    <property type="entry name" value="RIBOSOMAL_L27"/>
    <property type="match status" value="1"/>
</dbReference>
<keyword id="KW-1185">Reference proteome</keyword>
<keyword id="KW-0687">Ribonucleoprotein</keyword>
<keyword id="KW-0689">Ribosomal protein</keyword>
<feature type="chain" id="PRO_0000181049" description="Large ribosomal subunit protein bL27">
    <location>
        <begin position="1"/>
        <end position="82"/>
    </location>
</feature>
<feature type="region of interest" description="Disordered" evidence="2">
    <location>
        <begin position="1"/>
        <end position="20"/>
    </location>
</feature>
<feature type="compositionally biased region" description="Polar residues" evidence="2">
    <location>
        <begin position="7"/>
        <end position="19"/>
    </location>
</feature>
<name>RL27_BIFLO</name>
<evidence type="ECO:0000255" key="1">
    <source>
        <dbReference type="HAMAP-Rule" id="MF_00539"/>
    </source>
</evidence>
<evidence type="ECO:0000256" key="2">
    <source>
        <dbReference type="SAM" id="MobiDB-lite"/>
    </source>
</evidence>
<evidence type="ECO:0000305" key="3"/>
<proteinExistence type="inferred from homology"/>
<sequence length="82" mass="8817">MAHKKGASSSRNGRDSNPQYLGVKKFGGEAVVAGNIIVRQRGTNFHPGHNVGMGKDHTLFALTDGSVKFGVRRDRKVVDVIA</sequence>
<protein>
    <recommendedName>
        <fullName evidence="1">Large ribosomal subunit protein bL27</fullName>
    </recommendedName>
    <alternativeName>
        <fullName evidence="3">50S ribosomal protein L27</fullName>
    </alternativeName>
</protein>
<comment type="similarity">
    <text evidence="1">Belongs to the bacterial ribosomal protein bL27 family.</text>
</comment>
<gene>
    <name evidence="1" type="primary">rpmA</name>
    <name type="ordered locus">BL1283</name>
</gene>
<organism>
    <name type="scientific">Bifidobacterium longum (strain NCC 2705)</name>
    <dbReference type="NCBI Taxonomy" id="206672"/>
    <lineage>
        <taxon>Bacteria</taxon>
        <taxon>Bacillati</taxon>
        <taxon>Actinomycetota</taxon>
        <taxon>Actinomycetes</taxon>
        <taxon>Bifidobacteriales</taxon>
        <taxon>Bifidobacteriaceae</taxon>
        <taxon>Bifidobacterium</taxon>
    </lineage>
</organism>
<accession>Q8G4U1</accession>
<reference key="1">
    <citation type="journal article" date="2002" name="Proc. Natl. Acad. Sci. U.S.A.">
        <title>The genome sequence of Bifidobacterium longum reflects its adaptation to the human gastrointestinal tract.</title>
        <authorList>
            <person name="Schell M.A."/>
            <person name="Karmirantzou M."/>
            <person name="Snel B."/>
            <person name="Vilanova D."/>
            <person name="Berger B."/>
            <person name="Pessi G."/>
            <person name="Zwahlen M.-C."/>
            <person name="Desiere F."/>
            <person name="Bork P."/>
            <person name="Delley M."/>
            <person name="Pridmore R.D."/>
            <person name="Arigoni F."/>
        </authorList>
    </citation>
    <scope>NUCLEOTIDE SEQUENCE [LARGE SCALE GENOMIC DNA]</scope>
    <source>
        <strain>NCC 2705</strain>
    </source>
</reference>